<organism>
    <name type="scientific">Actinobacillus pleuropneumoniae serotype 5b (strain L20)</name>
    <dbReference type="NCBI Taxonomy" id="416269"/>
    <lineage>
        <taxon>Bacteria</taxon>
        <taxon>Pseudomonadati</taxon>
        <taxon>Pseudomonadota</taxon>
        <taxon>Gammaproteobacteria</taxon>
        <taxon>Pasteurellales</taxon>
        <taxon>Pasteurellaceae</taxon>
        <taxon>Actinobacillus</taxon>
    </lineage>
</organism>
<protein>
    <recommendedName>
        <fullName evidence="1">Integration host factor subunit alpha</fullName>
        <shortName evidence="1">IHF-alpha</shortName>
    </recommendedName>
</protein>
<comment type="function">
    <text evidence="1">This protein is one of the two subunits of integration host factor, a specific DNA-binding protein that functions in genetic recombination as well as in transcriptional and translational control.</text>
</comment>
<comment type="subunit">
    <text evidence="1">Heterodimer of an alpha and a beta chain.</text>
</comment>
<comment type="similarity">
    <text evidence="1">Belongs to the bacterial histone-like protein family.</text>
</comment>
<accession>A3MZX6</accession>
<feature type="chain" id="PRO_1000060530" description="Integration host factor subunit alpha">
    <location>
        <begin position="1"/>
        <end position="98"/>
    </location>
</feature>
<gene>
    <name evidence="1" type="primary">ihfA</name>
    <name evidence="1" type="synonym">himA</name>
    <name type="ordered locus">APL_0610</name>
</gene>
<evidence type="ECO:0000255" key="1">
    <source>
        <dbReference type="HAMAP-Rule" id="MF_00380"/>
    </source>
</evidence>
<keyword id="KW-0233">DNA recombination</keyword>
<keyword id="KW-0238">DNA-binding</keyword>
<keyword id="KW-1185">Reference proteome</keyword>
<keyword id="KW-0804">Transcription</keyword>
<keyword id="KW-0805">Transcription regulation</keyword>
<keyword id="KW-0810">Translation regulation</keyword>
<proteinExistence type="inferred from homology"/>
<dbReference type="EMBL" id="CP000569">
    <property type="protein sequence ID" value="ABN73712.1"/>
    <property type="molecule type" value="Genomic_DNA"/>
</dbReference>
<dbReference type="RefSeq" id="WP_005596864.1">
    <property type="nucleotide sequence ID" value="NC_009053.1"/>
</dbReference>
<dbReference type="SMR" id="A3MZX6"/>
<dbReference type="STRING" id="416269.APL_0610"/>
<dbReference type="EnsemblBacteria" id="ABN73712">
    <property type="protein sequence ID" value="ABN73712"/>
    <property type="gene ID" value="APL_0610"/>
</dbReference>
<dbReference type="KEGG" id="apl:APL_0610"/>
<dbReference type="eggNOG" id="COG0776">
    <property type="taxonomic scope" value="Bacteria"/>
</dbReference>
<dbReference type="HOGENOM" id="CLU_105066_1_3_6"/>
<dbReference type="Proteomes" id="UP000001432">
    <property type="component" value="Chromosome"/>
</dbReference>
<dbReference type="GO" id="GO:0005829">
    <property type="term" value="C:cytosol"/>
    <property type="evidence" value="ECO:0007669"/>
    <property type="project" value="TreeGrafter"/>
</dbReference>
<dbReference type="GO" id="GO:0003677">
    <property type="term" value="F:DNA binding"/>
    <property type="evidence" value="ECO:0007669"/>
    <property type="project" value="UniProtKB-UniRule"/>
</dbReference>
<dbReference type="GO" id="GO:0030527">
    <property type="term" value="F:structural constituent of chromatin"/>
    <property type="evidence" value="ECO:0007669"/>
    <property type="project" value="InterPro"/>
</dbReference>
<dbReference type="GO" id="GO:0006310">
    <property type="term" value="P:DNA recombination"/>
    <property type="evidence" value="ECO:0007669"/>
    <property type="project" value="UniProtKB-UniRule"/>
</dbReference>
<dbReference type="GO" id="GO:0009893">
    <property type="term" value="P:positive regulation of metabolic process"/>
    <property type="evidence" value="ECO:0007669"/>
    <property type="project" value="UniProtKB-ARBA"/>
</dbReference>
<dbReference type="GO" id="GO:0006355">
    <property type="term" value="P:regulation of DNA-templated transcription"/>
    <property type="evidence" value="ECO:0007669"/>
    <property type="project" value="UniProtKB-UniRule"/>
</dbReference>
<dbReference type="GO" id="GO:0006417">
    <property type="term" value="P:regulation of translation"/>
    <property type="evidence" value="ECO:0007669"/>
    <property type="project" value="UniProtKB-UniRule"/>
</dbReference>
<dbReference type="CDD" id="cd13835">
    <property type="entry name" value="IHF_A"/>
    <property type="match status" value="1"/>
</dbReference>
<dbReference type="Gene3D" id="4.10.520.10">
    <property type="entry name" value="IHF-like DNA-binding proteins"/>
    <property type="match status" value="1"/>
</dbReference>
<dbReference type="HAMAP" id="MF_00380">
    <property type="entry name" value="IHF_alpha"/>
    <property type="match status" value="1"/>
</dbReference>
<dbReference type="InterPro" id="IPR000119">
    <property type="entry name" value="Hist_DNA-bd"/>
</dbReference>
<dbReference type="InterPro" id="IPR020816">
    <property type="entry name" value="Histone-like_DNA-bd_CS"/>
</dbReference>
<dbReference type="InterPro" id="IPR010992">
    <property type="entry name" value="IHF-like_DNA-bd_dom_sf"/>
</dbReference>
<dbReference type="InterPro" id="IPR005684">
    <property type="entry name" value="IHF_alpha"/>
</dbReference>
<dbReference type="NCBIfam" id="TIGR00987">
    <property type="entry name" value="himA"/>
    <property type="match status" value="1"/>
</dbReference>
<dbReference type="NCBIfam" id="NF001401">
    <property type="entry name" value="PRK00285.1"/>
    <property type="match status" value="1"/>
</dbReference>
<dbReference type="PANTHER" id="PTHR33175">
    <property type="entry name" value="DNA-BINDING PROTEIN HU"/>
    <property type="match status" value="1"/>
</dbReference>
<dbReference type="PANTHER" id="PTHR33175:SF2">
    <property type="entry name" value="INTEGRATION HOST FACTOR SUBUNIT ALPHA"/>
    <property type="match status" value="1"/>
</dbReference>
<dbReference type="Pfam" id="PF00216">
    <property type="entry name" value="Bac_DNA_binding"/>
    <property type="match status" value="1"/>
</dbReference>
<dbReference type="PRINTS" id="PR01727">
    <property type="entry name" value="DNABINDINGHU"/>
</dbReference>
<dbReference type="SMART" id="SM00411">
    <property type="entry name" value="BHL"/>
    <property type="match status" value="1"/>
</dbReference>
<dbReference type="SUPFAM" id="SSF47729">
    <property type="entry name" value="IHF-like DNA-binding proteins"/>
    <property type="match status" value="1"/>
</dbReference>
<dbReference type="PROSITE" id="PS00045">
    <property type="entry name" value="HISTONE_LIKE"/>
    <property type="match status" value="1"/>
</dbReference>
<reference key="1">
    <citation type="journal article" date="2008" name="J. Bacteriol.">
        <title>The complete genome sequence of Actinobacillus pleuropneumoniae L20 (serotype 5b).</title>
        <authorList>
            <person name="Foote S.J."/>
            <person name="Bosse J.T."/>
            <person name="Bouevitch A.B."/>
            <person name="Langford P.R."/>
            <person name="Young N.M."/>
            <person name="Nash J.H.E."/>
        </authorList>
    </citation>
    <scope>NUCLEOTIDE SEQUENCE [LARGE SCALE GENOMIC DNA]</scope>
    <source>
        <strain>L20</strain>
    </source>
</reference>
<sequence length="98" mass="11082">MALTKIELAESLVEKCGFDKRIAKLFVEQFFEEIRSSLEKGEEVKLSGFGNFSLREKNARPGRNPKTGETVAVTARRVVVFKPGQKLRDRVENVKVKA</sequence>
<name>IHFA_ACTP2</name>